<protein>
    <recommendedName>
        <fullName evidence="1">Arginine repressor</fullName>
    </recommendedName>
</protein>
<feature type="chain" id="PRO_1000023613" description="Arginine repressor">
    <location>
        <begin position="1"/>
        <end position="156"/>
    </location>
</feature>
<gene>
    <name evidence="1" type="primary">argR</name>
    <name type="ordered locus">VIBHAR_00794</name>
</gene>
<dbReference type="EMBL" id="CP000789">
    <property type="protein sequence ID" value="ABU69795.1"/>
    <property type="molecule type" value="Genomic_DNA"/>
</dbReference>
<dbReference type="RefSeq" id="WP_005430583.1">
    <property type="nucleotide sequence ID" value="NC_022269.1"/>
</dbReference>
<dbReference type="SMR" id="A7MWD9"/>
<dbReference type="GeneID" id="83583060"/>
<dbReference type="KEGG" id="vha:VIBHAR_00794"/>
<dbReference type="PATRIC" id="fig|338187.25.peg.1820"/>
<dbReference type="UniPathway" id="UPA00068"/>
<dbReference type="Proteomes" id="UP000008152">
    <property type="component" value="Chromosome I"/>
</dbReference>
<dbReference type="GO" id="GO:0005737">
    <property type="term" value="C:cytoplasm"/>
    <property type="evidence" value="ECO:0007669"/>
    <property type="project" value="UniProtKB-SubCell"/>
</dbReference>
<dbReference type="GO" id="GO:0034618">
    <property type="term" value="F:arginine binding"/>
    <property type="evidence" value="ECO:0007669"/>
    <property type="project" value="InterPro"/>
</dbReference>
<dbReference type="GO" id="GO:0003677">
    <property type="term" value="F:DNA binding"/>
    <property type="evidence" value="ECO:0007669"/>
    <property type="project" value="UniProtKB-KW"/>
</dbReference>
<dbReference type="GO" id="GO:0003700">
    <property type="term" value="F:DNA-binding transcription factor activity"/>
    <property type="evidence" value="ECO:0007669"/>
    <property type="project" value="UniProtKB-UniRule"/>
</dbReference>
<dbReference type="GO" id="GO:0006526">
    <property type="term" value="P:L-arginine biosynthetic process"/>
    <property type="evidence" value="ECO:0007669"/>
    <property type="project" value="UniProtKB-UniPathway"/>
</dbReference>
<dbReference type="GO" id="GO:0051259">
    <property type="term" value="P:protein complex oligomerization"/>
    <property type="evidence" value="ECO:0007669"/>
    <property type="project" value="InterPro"/>
</dbReference>
<dbReference type="GO" id="GO:1900079">
    <property type="term" value="P:regulation of arginine biosynthetic process"/>
    <property type="evidence" value="ECO:0007669"/>
    <property type="project" value="UniProtKB-UniRule"/>
</dbReference>
<dbReference type="FunFam" id="1.10.10.10:FF:000074">
    <property type="entry name" value="Arginine repressor"/>
    <property type="match status" value="1"/>
</dbReference>
<dbReference type="Gene3D" id="3.30.1360.40">
    <property type="match status" value="1"/>
</dbReference>
<dbReference type="Gene3D" id="1.10.10.10">
    <property type="entry name" value="Winged helix-like DNA-binding domain superfamily/Winged helix DNA-binding domain"/>
    <property type="match status" value="1"/>
</dbReference>
<dbReference type="HAMAP" id="MF_00173">
    <property type="entry name" value="Arg_repressor"/>
    <property type="match status" value="1"/>
</dbReference>
<dbReference type="InterPro" id="IPR001669">
    <property type="entry name" value="Arg_repress"/>
</dbReference>
<dbReference type="InterPro" id="IPR020899">
    <property type="entry name" value="Arg_repress_C"/>
</dbReference>
<dbReference type="InterPro" id="IPR036251">
    <property type="entry name" value="Arg_repress_C_sf"/>
</dbReference>
<dbReference type="InterPro" id="IPR020900">
    <property type="entry name" value="Arg_repress_DNA-bd"/>
</dbReference>
<dbReference type="InterPro" id="IPR036388">
    <property type="entry name" value="WH-like_DNA-bd_sf"/>
</dbReference>
<dbReference type="InterPro" id="IPR036390">
    <property type="entry name" value="WH_DNA-bd_sf"/>
</dbReference>
<dbReference type="NCBIfam" id="TIGR01529">
    <property type="entry name" value="argR_whole"/>
    <property type="match status" value="1"/>
</dbReference>
<dbReference type="NCBIfam" id="NF003457">
    <property type="entry name" value="PRK05066.1"/>
    <property type="match status" value="1"/>
</dbReference>
<dbReference type="PANTHER" id="PTHR34471">
    <property type="entry name" value="ARGININE REPRESSOR"/>
    <property type="match status" value="1"/>
</dbReference>
<dbReference type="PANTHER" id="PTHR34471:SF1">
    <property type="entry name" value="ARGININE REPRESSOR"/>
    <property type="match status" value="1"/>
</dbReference>
<dbReference type="Pfam" id="PF01316">
    <property type="entry name" value="Arg_repressor"/>
    <property type="match status" value="1"/>
</dbReference>
<dbReference type="Pfam" id="PF02863">
    <property type="entry name" value="Arg_repressor_C"/>
    <property type="match status" value="1"/>
</dbReference>
<dbReference type="PRINTS" id="PR01467">
    <property type="entry name" value="ARGREPRESSOR"/>
</dbReference>
<dbReference type="SUPFAM" id="SSF55252">
    <property type="entry name" value="C-terminal domain of arginine repressor"/>
    <property type="match status" value="1"/>
</dbReference>
<dbReference type="SUPFAM" id="SSF46785">
    <property type="entry name" value="Winged helix' DNA-binding domain"/>
    <property type="match status" value="1"/>
</dbReference>
<keyword id="KW-0028">Amino-acid biosynthesis</keyword>
<keyword id="KW-0055">Arginine biosynthesis</keyword>
<keyword id="KW-0963">Cytoplasm</keyword>
<keyword id="KW-0238">DNA-binding</keyword>
<keyword id="KW-0678">Repressor</keyword>
<keyword id="KW-0804">Transcription</keyword>
<keyword id="KW-0805">Transcription regulation</keyword>
<proteinExistence type="inferred from homology"/>
<reference key="1">
    <citation type="submission" date="2007-08" db="EMBL/GenBank/DDBJ databases">
        <authorList>
            <consortium name="The Vibrio harveyi Genome Sequencing Project"/>
            <person name="Bassler B."/>
            <person name="Clifton S.W."/>
            <person name="Fulton L."/>
            <person name="Delehaunty K."/>
            <person name="Fronick C."/>
            <person name="Harrison M."/>
            <person name="Markivic C."/>
            <person name="Fulton R."/>
            <person name="Tin-Wollam A.-M."/>
            <person name="Shah N."/>
            <person name="Pepin K."/>
            <person name="Nash W."/>
            <person name="Thiruvilangam P."/>
            <person name="Bhonagiri V."/>
            <person name="Waters C."/>
            <person name="Tu K.C."/>
            <person name="Irgon J."/>
            <person name="Wilson R.K."/>
        </authorList>
    </citation>
    <scope>NUCLEOTIDE SEQUENCE [LARGE SCALE GENOMIC DNA]</scope>
    <source>
        <strain>ATCC BAA-1116 / BB120</strain>
    </source>
</reference>
<comment type="function">
    <text evidence="1">Regulates arginine biosynthesis genes.</text>
</comment>
<comment type="pathway">
    <text>Amino-acid biosynthesis; L-arginine biosynthesis [regulation].</text>
</comment>
<comment type="subcellular location">
    <subcellularLocation>
        <location evidence="1">Cytoplasm</location>
    </subcellularLocation>
</comment>
<comment type="similarity">
    <text evidence="1">Belongs to the ArgR family.</text>
</comment>
<accession>A7MWD9</accession>
<sequence>MRNSEKQDNLVRAFKALLKEESFGSQGEIVDALKQQGFESINQSKVSRMLTKFGAVRTRNAKMEMVYCLPAELGVPTVSSSLRELVLDIDHNAALVVIHTGPGAAQLIARLLDSLGKSEGILGVVAGDDTIFITPTMPVSTEQLFKSVCELFEYTG</sequence>
<evidence type="ECO:0000255" key="1">
    <source>
        <dbReference type="HAMAP-Rule" id="MF_00173"/>
    </source>
</evidence>
<organism>
    <name type="scientific">Vibrio campbellii (strain ATCC BAA-1116)</name>
    <dbReference type="NCBI Taxonomy" id="2902295"/>
    <lineage>
        <taxon>Bacteria</taxon>
        <taxon>Pseudomonadati</taxon>
        <taxon>Pseudomonadota</taxon>
        <taxon>Gammaproteobacteria</taxon>
        <taxon>Vibrionales</taxon>
        <taxon>Vibrionaceae</taxon>
        <taxon>Vibrio</taxon>
    </lineage>
</organism>
<name>ARGR_VIBC1</name>